<evidence type="ECO:0000255" key="1">
    <source>
        <dbReference type="HAMAP-Rule" id="MF_00204"/>
    </source>
</evidence>
<dbReference type="EMBL" id="CP001337">
    <property type="protein sequence ID" value="ACL24323.1"/>
    <property type="molecule type" value="Genomic_DNA"/>
</dbReference>
<dbReference type="RefSeq" id="WP_012616687.1">
    <property type="nucleotide sequence ID" value="NC_011831.1"/>
</dbReference>
<dbReference type="SMR" id="B8G8R1"/>
<dbReference type="STRING" id="326427.Cagg_1416"/>
<dbReference type="KEGG" id="cag:Cagg_1416"/>
<dbReference type="eggNOG" id="COG0556">
    <property type="taxonomic scope" value="Bacteria"/>
</dbReference>
<dbReference type="HOGENOM" id="CLU_009621_2_1_0"/>
<dbReference type="OrthoDB" id="9806651at2"/>
<dbReference type="Proteomes" id="UP000002508">
    <property type="component" value="Chromosome"/>
</dbReference>
<dbReference type="GO" id="GO:0005737">
    <property type="term" value="C:cytoplasm"/>
    <property type="evidence" value="ECO:0007669"/>
    <property type="project" value="UniProtKB-SubCell"/>
</dbReference>
<dbReference type="GO" id="GO:0009380">
    <property type="term" value="C:excinuclease repair complex"/>
    <property type="evidence" value="ECO:0007669"/>
    <property type="project" value="InterPro"/>
</dbReference>
<dbReference type="GO" id="GO:0005524">
    <property type="term" value="F:ATP binding"/>
    <property type="evidence" value="ECO:0007669"/>
    <property type="project" value="UniProtKB-UniRule"/>
</dbReference>
<dbReference type="GO" id="GO:0016887">
    <property type="term" value="F:ATP hydrolysis activity"/>
    <property type="evidence" value="ECO:0007669"/>
    <property type="project" value="InterPro"/>
</dbReference>
<dbReference type="GO" id="GO:0003677">
    <property type="term" value="F:DNA binding"/>
    <property type="evidence" value="ECO:0007669"/>
    <property type="project" value="UniProtKB-UniRule"/>
</dbReference>
<dbReference type="GO" id="GO:0009381">
    <property type="term" value="F:excinuclease ABC activity"/>
    <property type="evidence" value="ECO:0007669"/>
    <property type="project" value="UniProtKB-UniRule"/>
</dbReference>
<dbReference type="GO" id="GO:0004386">
    <property type="term" value="F:helicase activity"/>
    <property type="evidence" value="ECO:0007669"/>
    <property type="project" value="UniProtKB-KW"/>
</dbReference>
<dbReference type="GO" id="GO:0006289">
    <property type="term" value="P:nucleotide-excision repair"/>
    <property type="evidence" value="ECO:0007669"/>
    <property type="project" value="UniProtKB-UniRule"/>
</dbReference>
<dbReference type="GO" id="GO:0009432">
    <property type="term" value="P:SOS response"/>
    <property type="evidence" value="ECO:0007669"/>
    <property type="project" value="UniProtKB-UniRule"/>
</dbReference>
<dbReference type="CDD" id="cd17916">
    <property type="entry name" value="DEXHc_UvrB"/>
    <property type="match status" value="1"/>
</dbReference>
<dbReference type="CDD" id="cd18790">
    <property type="entry name" value="SF2_C_UvrB"/>
    <property type="match status" value="1"/>
</dbReference>
<dbReference type="Gene3D" id="3.40.50.300">
    <property type="entry name" value="P-loop containing nucleotide triphosphate hydrolases"/>
    <property type="match status" value="4"/>
</dbReference>
<dbReference type="Gene3D" id="3.30.2060.10">
    <property type="entry name" value="Penicillin-binding protein 1b domain"/>
    <property type="match status" value="1"/>
</dbReference>
<dbReference type="Gene3D" id="4.10.860.10">
    <property type="entry name" value="UVR domain"/>
    <property type="match status" value="1"/>
</dbReference>
<dbReference type="HAMAP" id="MF_00204">
    <property type="entry name" value="UvrB"/>
    <property type="match status" value="1"/>
</dbReference>
<dbReference type="InterPro" id="IPR006935">
    <property type="entry name" value="Helicase/UvrB_N"/>
</dbReference>
<dbReference type="InterPro" id="IPR014001">
    <property type="entry name" value="Helicase_ATP-bd"/>
</dbReference>
<dbReference type="InterPro" id="IPR001650">
    <property type="entry name" value="Helicase_C-like"/>
</dbReference>
<dbReference type="InterPro" id="IPR027417">
    <property type="entry name" value="P-loop_NTPase"/>
</dbReference>
<dbReference type="InterPro" id="IPR001943">
    <property type="entry name" value="UVR_dom"/>
</dbReference>
<dbReference type="InterPro" id="IPR036876">
    <property type="entry name" value="UVR_dom_sf"/>
</dbReference>
<dbReference type="InterPro" id="IPR004807">
    <property type="entry name" value="UvrB"/>
</dbReference>
<dbReference type="InterPro" id="IPR041471">
    <property type="entry name" value="UvrB_inter"/>
</dbReference>
<dbReference type="InterPro" id="IPR024759">
    <property type="entry name" value="UvrB_YAD/RRR_dom"/>
</dbReference>
<dbReference type="NCBIfam" id="NF003673">
    <property type="entry name" value="PRK05298.1"/>
    <property type="match status" value="1"/>
</dbReference>
<dbReference type="NCBIfam" id="TIGR00631">
    <property type="entry name" value="uvrb"/>
    <property type="match status" value="1"/>
</dbReference>
<dbReference type="PANTHER" id="PTHR24029">
    <property type="entry name" value="UVRABC SYSTEM PROTEIN B"/>
    <property type="match status" value="1"/>
</dbReference>
<dbReference type="PANTHER" id="PTHR24029:SF0">
    <property type="entry name" value="UVRABC SYSTEM PROTEIN B"/>
    <property type="match status" value="1"/>
</dbReference>
<dbReference type="Pfam" id="PF00271">
    <property type="entry name" value="Helicase_C"/>
    <property type="match status" value="1"/>
</dbReference>
<dbReference type="Pfam" id="PF04851">
    <property type="entry name" value="ResIII"/>
    <property type="match status" value="1"/>
</dbReference>
<dbReference type="Pfam" id="PF02151">
    <property type="entry name" value="UVR"/>
    <property type="match status" value="1"/>
</dbReference>
<dbReference type="Pfam" id="PF12344">
    <property type="entry name" value="UvrB"/>
    <property type="match status" value="1"/>
</dbReference>
<dbReference type="Pfam" id="PF17757">
    <property type="entry name" value="UvrB_inter"/>
    <property type="match status" value="1"/>
</dbReference>
<dbReference type="SMART" id="SM00487">
    <property type="entry name" value="DEXDc"/>
    <property type="match status" value="1"/>
</dbReference>
<dbReference type="SMART" id="SM00490">
    <property type="entry name" value="HELICc"/>
    <property type="match status" value="1"/>
</dbReference>
<dbReference type="SUPFAM" id="SSF46600">
    <property type="entry name" value="C-terminal UvrC-binding domain of UvrB"/>
    <property type="match status" value="1"/>
</dbReference>
<dbReference type="SUPFAM" id="SSF52540">
    <property type="entry name" value="P-loop containing nucleoside triphosphate hydrolases"/>
    <property type="match status" value="2"/>
</dbReference>
<dbReference type="PROSITE" id="PS51192">
    <property type="entry name" value="HELICASE_ATP_BIND_1"/>
    <property type="match status" value="1"/>
</dbReference>
<dbReference type="PROSITE" id="PS51194">
    <property type="entry name" value="HELICASE_CTER"/>
    <property type="match status" value="1"/>
</dbReference>
<dbReference type="PROSITE" id="PS50151">
    <property type="entry name" value="UVR"/>
    <property type="match status" value="1"/>
</dbReference>
<name>UVRB_CHLAD</name>
<proteinExistence type="inferred from homology"/>
<gene>
    <name evidence="1" type="primary">uvrB</name>
    <name type="ordered locus">Cagg_1416</name>
</gene>
<protein>
    <recommendedName>
        <fullName evidence="1">UvrABC system protein B</fullName>
        <shortName evidence="1">Protein UvrB</shortName>
    </recommendedName>
    <alternativeName>
        <fullName evidence="1">Excinuclease ABC subunit B</fullName>
    </alternativeName>
</protein>
<sequence length="664" mass="76041">MPFRIEAPYQPTGDQPQAIEKLVAGLRAGYRHQTLLGATGTGKTFVMAHIFAQIQRPTLVLAHNKTLVSQLWAEFREFLPDAAVEMFISYYDEYTPEAYVPSKDLYIEKEASINEEIDRLRHAATQALLTRRDVLIVASVSAIFGLGSPHDYGQEKIHLRTGEVRNRDKLLRQLIDLQFERNDVDFQRGTFRVRGDTLDIIPANAETAIRVEFWGDEIERIVELDPLTGEVLLKHTAVEIYPAKHFVTTKEKLQLAIVSIQAELNERLQELEAAGKLLEAQRLKQRTLYDLEMLSEVGYCSGIENYSRHLDGRAPGQTPWTLLDYFPDDFLMFIDESHITIPQLRGMYNGDRQRKQTLVDYGFRLPSALDNRPLKFEEFEQHVYQVIYVSATPGPYEREKSEQIVEQIIRPTGLLDPEIEVRPTRGQIDDLLGEIRRRVERKQRVLVTTLTKRMAEDLADYLKEMGVRTMYLHADIDTIERVEILRDLRLGVYDVVVGINLLREGLDLPEVSLVAILDADKEGYLRSETSLIQIIGRAARHIEGKVIMYADTITRSMEVAIRETQRRREIQMAHNVRHGITPQGIAKGVRDLTDRIRKVAEERGEYVTTPETAVPVDLPRDEVLKLIKDLEKQMKQAAKALAFEKAAALRDQIVELRQALALSE</sequence>
<keyword id="KW-0067">ATP-binding</keyword>
<keyword id="KW-0963">Cytoplasm</keyword>
<keyword id="KW-0227">DNA damage</keyword>
<keyword id="KW-0228">DNA excision</keyword>
<keyword id="KW-0234">DNA repair</keyword>
<keyword id="KW-0267">Excision nuclease</keyword>
<keyword id="KW-0347">Helicase</keyword>
<keyword id="KW-0378">Hydrolase</keyword>
<keyword id="KW-0547">Nucleotide-binding</keyword>
<keyword id="KW-0742">SOS response</keyword>
<accession>B8G8R1</accession>
<comment type="function">
    <text evidence="1">The UvrABC repair system catalyzes the recognition and processing of DNA lesions. A damage recognition complex composed of 2 UvrA and 2 UvrB subunits scans DNA for abnormalities. Upon binding of the UvrA(2)B(2) complex to a putative damaged site, the DNA wraps around one UvrB monomer. DNA wrap is dependent on ATP binding by UvrB and probably causes local melting of the DNA helix, facilitating insertion of UvrB beta-hairpin between the DNA strands. Then UvrB probes one DNA strand for the presence of a lesion. If a lesion is found the UvrA subunits dissociate and the UvrB-DNA preincision complex is formed. This complex is subsequently bound by UvrC and the second UvrB is released. If no lesion is found, the DNA wraps around the other UvrB subunit that will check the other stand for damage.</text>
</comment>
<comment type="subunit">
    <text evidence="1">Forms a heterotetramer with UvrA during the search for lesions. Interacts with UvrC in an incision complex.</text>
</comment>
<comment type="subcellular location">
    <subcellularLocation>
        <location evidence="1">Cytoplasm</location>
    </subcellularLocation>
</comment>
<comment type="domain">
    <text evidence="1">The beta-hairpin motif is involved in DNA binding.</text>
</comment>
<comment type="similarity">
    <text evidence="1">Belongs to the UvrB family.</text>
</comment>
<reference key="1">
    <citation type="submission" date="2008-12" db="EMBL/GenBank/DDBJ databases">
        <title>Complete sequence of Chloroflexus aggregans DSM 9485.</title>
        <authorList>
            <consortium name="US DOE Joint Genome Institute"/>
            <person name="Lucas S."/>
            <person name="Copeland A."/>
            <person name="Lapidus A."/>
            <person name="Glavina del Rio T."/>
            <person name="Dalin E."/>
            <person name="Tice H."/>
            <person name="Pitluck S."/>
            <person name="Foster B."/>
            <person name="Larimer F."/>
            <person name="Land M."/>
            <person name="Hauser L."/>
            <person name="Kyrpides N."/>
            <person name="Mikhailova N."/>
            <person name="Bryant D.A."/>
            <person name="Richardson P."/>
        </authorList>
    </citation>
    <scope>NUCLEOTIDE SEQUENCE [LARGE SCALE GENOMIC DNA]</scope>
    <source>
        <strain>MD-66 / DSM 9485</strain>
    </source>
</reference>
<organism>
    <name type="scientific">Chloroflexus aggregans (strain MD-66 / DSM 9485)</name>
    <dbReference type="NCBI Taxonomy" id="326427"/>
    <lineage>
        <taxon>Bacteria</taxon>
        <taxon>Bacillati</taxon>
        <taxon>Chloroflexota</taxon>
        <taxon>Chloroflexia</taxon>
        <taxon>Chloroflexales</taxon>
        <taxon>Chloroflexineae</taxon>
        <taxon>Chloroflexaceae</taxon>
        <taxon>Chloroflexus</taxon>
    </lineage>
</organism>
<feature type="chain" id="PRO_1000200535" description="UvrABC system protein B">
    <location>
        <begin position="1"/>
        <end position="664"/>
    </location>
</feature>
<feature type="domain" description="Helicase ATP-binding" evidence="1">
    <location>
        <begin position="24"/>
        <end position="182"/>
    </location>
</feature>
<feature type="domain" description="Helicase C-terminal" evidence="1">
    <location>
        <begin position="427"/>
        <end position="593"/>
    </location>
</feature>
<feature type="domain" description="UVR" evidence="1">
    <location>
        <begin position="624"/>
        <end position="659"/>
    </location>
</feature>
<feature type="short sequence motif" description="Beta-hairpin">
    <location>
        <begin position="90"/>
        <end position="113"/>
    </location>
</feature>
<feature type="binding site" evidence="1">
    <location>
        <begin position="37"/>
        <end position="44"/>
    </location>
    <ligand>
        <name>ATP</name>
        <dbReference type="ChEBI" id="CHEBI:30616"/>
    </ligand>
</feature>